<accession>Q4P6V4</accession>
<accession>A0A0D1DYR4</accession>
<sequence length="286" mass="29968">MASSNATNSTSAASAANTNSSAFKSAELAALSGVEAAKRAAAYAAVDNHVKPQHEIIGIGSGSTVPYVVERIAQQGPAVNAKRWFVPTGFQSRELIINAGLRLGDVDSFPSIDVTIDGADEVDNALNCIKGGGACHLREKVLAEAANEFVVVADYRKNGSQLGTKWLQGVPIEVAPFAYAKVLQNLKKMGSDKAVLRMGKAKAGPVVTDNGNFCIDAPFPEAQMKDPSDLLKRIKLLTGVLEVGLFCNICKSAYFGNDDGTITIKTAAGDVQEGVHFDVSKAPATA</sequence>
<keyword id="KW-0963">Cytoplasm</keyword>
<keyword id="KW-0413">Isomerase</keyword>
<keyword id="KW-1185">Reference proteome</keyword>
<name>RPIA_MYCMD</name>
<evidence type="ECO:0000305" key="1"/>
<feature type="chain" id="PRO_0000339893" description="Ribose-5-phosphate isomerase">
    <location>
        <begin position="1"/>
        <end position="286"/>
    </location>
</feature>
<reference key="1">
    <citation type="journal article" date="2006" name="Nature">
        <title>Insights from the genome of the biotrophic fungal plant pathogen Ustilago maydis.</title>
        <authorList>
            <person name="Kaemper J."/>
            <person name="Kahmann R."/>
            <person name="Boelker M."/>
            <person name="Ma L.-J."/>
            <person name="Brefort T."/>
            <person name="Saville B.J."/>
            <person name="Banuett F."/>
            <person name="Kronstad J.W."/>
            <person name="Gold S.E."/>
            <person name="Mueller O."/>
            <person name="Perlin M.H."/>
            <person name="Woesten H.A.B."/>
            <person name="de Vries R."/>
            <person name="Ruiz-Herrera J."/>
            <person name="Reynaga-Pena C.G."/>
            <person name="Snetselaar K."/>
            <person name="McCann M."/>
            <person name="Perez-Martin J."/>
            <person name="Feldbruegge M."/>
            <person name="Basse C.W."/>
            <person name="Steinberg G."/>
            <person name="Ibeas J.I."/>
            <person name="Holloman W."/>
            <person name="Guzman P."/>
            <person name="Farman M.L."/>
            <person name="Stajich J.E."/>
            <person name="Sentandreu R."/>
            <person name="Gonzalez-Prieto J.M."/>
            <person name="Kennell J.C."/>
            <person name="Molina L."/>
            <person name="Schirawski J."/>
            <person name="Mendoza-Mendoza A."/>
            <person name="Greilinger D."/>
            <person name="Muench K."/>
            <person name="Roessel N."/>
            <person name="Scherer M."/>
            <person name="Vranes M."/>
            <person name="Ladendorf O."/>
            <person name="Vincon V."/>
            <person name="Fuchs U."/>
            <person name="Sandrock B."/>
            <person name="Meng S."/>
            <person name="Ho E.C.H."/>
            <person name="Cahill M.J."/>
            <person name="Boyce K.J."/>
            <person name="Klose J."/>
            <person name="Klosterman S.J."/>
            <person name="Deelstra H.J."/>
            <person name="Ortiz-Castellanos L."/>
            <person name="Li W."/>
            <person name="Sanchez-Alonso P."/>
            <person name="Schreier P.H."/>
            <person name="Haeuser-Hahn I."/>
            <person name="Vaupel M."/>
            <person name="Koopmann E."/>
            <person name="Friedrich G."/>
            <person name="Voss H."/>
            <person name="Schlueter T."/>
            <person name="Margolis J."/>
            <person name="Platt D."/>
            <person name="Swimmer C."/>
            <person name="Gnirke A."/>
            <person name="Chen F."/>
            <person name="Vysotskaia V."/>
            <person name="Mannhaupt G."/>
            <person name="Gueldener U."/>
            <person name="Muensterkoetter M."/>
            <person name="Haase D."/>
            <person name="Oesterheld M."/>
            <person name="Mewes H.-W."/>
            <person name="Mauceli E.W."/>
            <person name="DeCaprio D."/>
            <person name="Wade C.M."/>
            <person name="Butler J."/>
            <person name="Young S.K."/>
            <person name="Jaffe D.B."/>
            <person name="Calvo S.E."/>
            <person name="Nusbaum C."/>
            <person name="Galagan J.E."/>
            <person name="Birren B.W."/>
        </authorList>
    </citation>
    <scope>NUCLEOTIDE SEQUENCE [LARGE SCALE GENOMIC DNA]</scope>
    <source>
        <strain>DSM 14603 / FGSC 9021 / UM521</strain>
    </source>
</reference>
<reference key="2">
    <citation type="submission" date="2014-09" db="EMBL/GenBank/DDBJ databases">
        <authorList>
            <person name="Gueldener U."/>
            <person name="Muensterkoetter M."/>
            <person name="Walter M.C."/>
            <person name="Mannhaupt G."/>
            <person name="Kahmann R."/>
        </authorList>
    </citation>
    <scope>GENOME REANNOTATION</scope>
    <source>
        <strain>DSM 14603 / FGSC 9021 / UM521</strain>
    </source>
</reference>
<gene>
    <name type="primary">RKI1</name>
    <name type="ORF">UMAG_04159</name>
</gene>
<dbReference type="EC" id="5.3.1.6"/>
<dbReference type="EMBL" id="CM003151">
    <property type="protein sequence ID" value="KIS67655.1"/>
    <property type="molecule type" value="Genomic_DNA"/>
</dbReference>
<dbReference type="RefSeq" id="XP_011390648.1">
    <property type="nucleotide sequence ID" value="XM_011392346.1"/>
</dbReference>
<dbReference type="SMR" id="Q4P6V4"/>
<dbReference type="FunCoup" id="Q4P6V4">
    <property type="interactions" value="505"/>
</dbReference>
<dbReference type="STRING" id="237631.Q4P6V4"/>
<dbReference type="EnsemblFungi" id="KIS67655">
    <property type="protein sequence ID" value="KIS67655"/>
    <property type="gene ID" value="UMAG_04159"/>
</dbReference>
<dbReference type="GeneID" id="23564419"/>
<dbReference type="KEGG" id="uma:UMAG_04159"/>
<dbReference type="VEuPathDB" id="FungiDB:UMAG_04159"/>
<dbReference type="eggNOG" id="KOG3075">
    <property type="taxonomic scope" value="Eukaryota"/>
</dbReference>
<dbReference type="HOGENOM" id="CLU_056590_0_1_1"/>
<dbReference type="InParanoid" id="Q4P6V4"/>
<dbReference type="OMA" id="ACHVQEK"/>
<dbReference type="OrthoDB" id="1555531at2759"/>
<dbReference type="UniPathway" id="UPA00115">
    <property type="reaction ID" value="UER00412"/>
</dbReference>
<dbReference type="Proteomes" id="UP000000561">
    <property type="component" value="Chromosome 12"/>
</dbReference>
<dbReference type="GO" id="GO:0005737">
    <property type="term" value="C:cytoplasm"/>
    <property type="evidence" value="ECO:0000318"/>
    <property type="project" value="GO_Central"/>
</dbReference>
<dbReference type="GO" id="GO:0004751">
    <property type="term" value="F:ribose-5-phosphate isomerase activity"/>
    <property type="evidence" value="ECO:0000318"/>
    <property type="project" value="GO_Central"/>
</dbReference>
<dbReference type="GO" id="GO:0006014">
    <property type="term" value="P:D-ribose metabolic process"/>
    <property type="evidence" value="ECO:0000318"/>
    <property type="project" value="GO_Central"/>
</dbReference>
<dbReference type="GO" id="GO:0009052">
    <property type="term" value="P:pentose-phosphate shunt, non-oxidative branch"/>
    <property type="evidence" value="ECO:0000318"/>
    <property type="project" value="GO_Central"/>
</dbReference>
<dbReference type="CDD" id="cd01398">
    <property type="entry name" value="RPI_A"/>
    <property type="match status" value="1"/>
</dbReference>
<dbReference type="FunFam" id="3.40.50.1360:FF:000014">
    <property type="entry name" value="Ribose 5-phosphate isomerase"/>
    <property type="match status" value="1"/>
</dbReference>
<dbReference type="FunFam" id="3.30.70.260:FF:000053">
    <property type="entry name" value="Ribose-5-phosphate isomerase, putative"/>
    <property type="match status" value="1"/>
</dbReference>
<dbReference type="Gene3D" id="3.30.70.260">
    <property type="match status" value="1"/>
</dbReference>
<dbReference type="Gene3D" id="3.40.50.1360">
    <property type="match status" value="1"/>
</dbReference>
<dbReference type="InterPro" id="IPR037171">
    <property type="entry name" value="NagB/RpiA_transferase-like"/>
</dbReference>
<dbReference type="InterPro" id="IPR004788">
    <property type="entry name" value="Ribose5P_isomerase_type_A"/>
</dbReference>
<dbReference type="NCBIfam" id="NF001924">
    <property type="entry name" value="PRK00702.1"/>
    <property type="match status" value="1"/>
</dbReference>
<dbReference type="NCBIfam" id="TIGR00021">
    <property type="entry name" value="rpiA"/>
    <property type="match status" value="1"/>
</dbReference>
<dbReference type="PANTHER" id="PTHR11934">
    <property type="entry name" value="RIBOSE-5-PHOSPHATE ISOMERASE"/>
    <property type="match status" value="1"/>
</dbReference>
<dbReference type="PANTHER" id="PTHR11934:SF0">
    <property type="entry name" value="RIBOSE-5-PHOSPHATE ISOMERASE"/>
    <property type="match status" value="1"/>
</dbReference>
<dbReference type="Pfam" id="PF06026">
    <property type="entry name" value="Rib_5-P_isom_A"/>
    <property type="match status" value="1"/>
</dbReference>
<dbReference type="SUPFAM" id="SSF75445">
    <property type="entry name" value="D-ribose-5-phosphate isomerase (RpiA), lid domain"/>
    <property type="match status" value="1"/>
</dbReference>
<dbReference type="SUPFAM" id="SSF100950">
    <property type="entry name" value="NagB/RpiA/CoA transferase-like"/>
    <property type="match status" value="1"/>
</dbReference>
<proteinExistence type="inferred from homology"/>
<comment type="catalytic activity">
    <reaction>
        <text>aldehydo-D-ribose 5-phosphate = D-ribulose 5-phosphate</text>
        <dbReference type="Rhea" id="RHEA:14657"/>
        <dbReference type="ChEBI" id="CHEBI:58121"/>
        <dbReference type="ChEBI" id="CHEBI:58273"/>
        <dbReference type="EC" id="5.3.1.6"/>
    </reaction>
</comment>
<comment type="pathway">
    <text>Carbohydrate degradation; pentose phosphate pathway; D-ribose 5-phosphate from D-ribulose 5-phosphate (non-oxidative stage): step 1/1.</text>
</comment>
<comment type="subcellular location">
    <subcellularLocation>
        <location evidence="1">Cytoplasm</location>
    </subcellularLocation>
</comment>
<comment type="similarity">
    <text evidence="1">Belongs to the ribose 5-phosphate isomerase family.</text>
</comment>
<organism>
    <name type="scientific">Mycosarcoma maydis</name>
    <name type="common">Corn smut fungus</name>
    <name type="synonym">Ustilago maydis</name>
    <dbReference type="NCBI Taxonomy" id="5270"/>
    <lineage>
        <taxon>Eukaryota</taxon>
        <taxon>Fungi</taxon>
        <taxon>Dikarya</taxon>
        <taxon>Basidiomycota</taxon>
        <taxon>Ustilaginomycotina</taxon>
        <taxon>Ustilaginomycetes</taxon>
        <taxon>Ustilaginales</taxon>
        <taxon>Ustilaginaceae</taxon>
        <taxon>Mycosarcoma</taxon>
    </lineage>
</organism>
<protein>
    <recommendedName>
        <fullName>Ribose-5-phosphate isomerase</fullName>
        <ecNumber>5.3.1.6</ecNumber>
    </recommendedName>
    <alternativeName>
        <fullName>D-ribose-5-phosphate ketol-isomerase</fullName>
    </alternativeName>
    <alternativeName>
        <fullName>Phosphoriboisomerase</fullName>
    </alternativeName>
</protein>